<sequence length="142" mass="15967">MKTYSAKSHEVQGDWFVVDATDKVLGRLSVELAKRLRGKHKPEYTPHADTGDYIVVINADKIAVTGNKAKDKIYYHHTGYVGNLKSASFEKMKETHPERIIELAVKGMLPKNPLGRAMFKKLKVYTGSEHPHSAQQPQPLNV</sequence>
<comment type="function">
    <text evidence="1">This protein is one of the early assembly proteins of the 50S ribosomal subunit, although it is not seen to bind rRNA by itself. It is important during the early stages of 50S assembly.</text>
</comment>
<comment type="subunit">
    <text evidence="1">Part of the 50S ribosomal subunit.</text>
</comment>
<comment type="similarity">
    <text evidence="1">Belongs to the universal ribosomal protein uL13 family.</text>
</comment>
<gene>
    <name evidence="1" type="primary">rplM</name>
    <name type="ordered locus">Lferr_2681</name>
</gene>
<dbReference type="EMBL" id="CP001132">
    <property type="protein sequence ID" value="ACH84875.1"/>
    <property type="molecule type" value="Genomic_DNA"/>
</dbReference>
<dbReference type="RefSeq" id="WP_009567386.1">
    <property type="nucleotide sequence ID" value="NC_011206.1"/>
</dbReference>
<dbReference type="SMR" id="B5EQH8"/>
<dbReference type="GeneID" id="65282074"/>
<dbReference type="KEGG" id="afe:Lferr_2681"/>
<dbReference type="eggNOG" id="COG0102">
    <property type="taxonomic scope" value="Bacteria"/>
</dbReference>
<dbReference type="HOGENOM" id="CLU_082184_2_2_6"/>
<dbReference type="GO" id="GO:0022625">
    <property type="term" value="C:cytosolic large ribosomal subunit"/>
    <property type="evidence" value="ECO:0007669"/>
    <property type="project" value="TreeGrafter"/>
</dbReference>
<dbReference type="GO" id="GO:0003729">
    <property type="term" value="F:mRNA binding"/>
    <property type="evidence" value="ECO:0007669"/>
    <property type="project" value="TreeGrafter"/>
</dbReference>
<dbReference type="GO" id="GO:0003735">
    <property type="term" value="F:structural constituent of ribosome"/>
    <property type="evidence" value="ECO:0007669"/>
    <property type="project" value="InterPro"/>
</dbReference>
<dbReference type="GO" id="GO:0017148">
    <property type="term" value="P:negative regulation of translation"/>
    <property type="evidence" value="ECO:0007669"/>
    <property type="project" value="TreeGrafter"/>
</dbReference>
<dbReference type="GO" id="GO:0006412">
    <property type="term" value="P:translation"/>
    <property type="evidence" value="ECO:0007669"/>
    <property type="project" value="UniProtKB-UniRule"/>
</dbReference>
<dbReference type="CDD" id="cd00392">
    <property type="entry name" value="Ribosomal_L13"/>
    <property type="match status" value="1"/>
</dbReference>
<dbReference type="FunFam" id="3.90.1180.10:FF:000001">
    <property type="entry name" value="50S ribosomal protein L13"/>
    <property type="match status" value="1"/>
</dbReference>
<dbReference type="Gene3D" id="3.90.1180.10">
    <property type="entry name" value="Ribosomal protein L13"/>
    <property type="match status" value="1"/>
</dbReference>
<dbReference type="HAMAP" id="MF_01366">
    <property type="entry name" value="Ribosomal_uL13"/>
    <property type="match status" value="1"/>
</dbReference>
<dbReference type="InterPro" id="IPR005822">
    <property type="entry name" value="Ribosomal_uL13"/>
</dbReference>
<dbReference type="InterPro" id="IPR005823">
    <property type="entry name" value="Ribosomal_uL13_bac-type"/>
</dbReference>
<dbReference type="InterPro" id="IPR023563">
    <property type="entry name" value="Ribosomal_uL13_CS"/>
</dbReference>
<dbReference type="InterPro" id="IPR036899">
    <property type="entry name" value="Ribosomal_uL13_sf"/>
</dbReference>
<dbReference type="NCBIfam" id="TIGR01066">
    <property type="entry name" value="rplM_bact"/>
    <property type="match status" value="1"/>
</dbReference>
<dbReference type="PANTHER" id="PTHR11545:SF2">
    <property type="entry name" value="LARGE RIBOSOMAL SUBUNIT PROTEIN UL13M"/>
    <property type="match status" value="1"/>
</dbReference>
<dbReference type="PANTHER" id="PTHR11545">
    <property type="entry name" value="RIBOSOMAL PROTEIN L13"/>
    <property type="match status" value="1"/>
</dbReference>
<dbReference type="Pfam" id="PF00572">
    <property type="entry name" value="Ribosomal_L13"/>
    <property type="match status" value="1"/>
</dbReference>
<dbReference type="PIRSF" id="PIRSF002181">
    <property type="entry name" value="Ribosomal_L13"/>
    <property type="match status" value="1"/>
</dbReference>
<dbReference type="SUPFAM" id="SSF52161">
    <property type="entry name" value="Ribosomal protein L13"/>
    <property type="match status" value="1"/>
</dbReference>
<dbReference type="PROSITE" id="PS00783">
    <property type="entry name" value="RIBOSOMAL_L13"/>
    <property type="match status" value="1"/>
</dbReference>
<proteinExistence type="inferred from homology"/>
<reference key="1">
    <citation type="submission" date="2008-08" db="EMBL/GenBank/DDBJ databases">
        <title>Complete sequence of Acidithiobacillus ferrooxidans ATCC 53993.</title>
        <authorList>
            <person name="Lucas S."/>
            <person name="Copeland A."/>
            <person name="Lapidus A."/>
            <person name="Glavina del Rio T."/>
            <person name="Dalin E."/>
            <person name="Tice H."/>
            <person name="Bruce D."/>
            <person name="Goodwin L."/>
            <person name="Pitluck S."/>
            <person name="Sims D."/>
            <person name="Brettin T."/>
            <person name="Detter J.C."/>
            <person name="Han C."/>
            <person name="Kuske C.R."/>
            <person name="Larimer F."/>
            <person name="Land M."/>
            <person name="Hauser L."/>
            <person name="Kyrpides N."/>
            <person name="Lykidis A."/>
            <person name="Borole A.P."/>
        </authorList>
    </citation>
    <scope>NUCLEOTIDE SEQUENCE [LARGE SCALE GENOMIC DNA]</scope>
    <source>
        <strain>ATCC 53993 / BNL-5-31</strain>
    </source>
</reference>
<keyword id="KW-0687">Ribonucleoprotein</keyword>
<keyword id="KW-0689">Ribosomal protein</keyword>
<evidence type="ECO:0000255" key="1">
    <source>
        <dbReference type="HAMAP-Rule" id="MF_01366"/>
    </source>
</evidence>
<evidence type="ECO:0000305" key="2"/>
<organism>
    <name type="scientific">Acidithiobacillus ferrooxidans (strain ATCC 53993 / BNL-5-31)</name>
    <name type="common">Leptospirillum ferrooxidans (ATCC 53993)</name>
    <dbReference type="NCBI Taxonomy" id="380394"/>
    <lineage>
        <taxon>Bacteria</taxon>
        <taxon>Pseudomonadati</taxon>
        <taxon>Pseudomonadota</taxon>
        <taxon>Acidithiobacillia</taxon>
        <taxon>Acidithiobacillales</taxon>
        <taxon>Acidithiobacillaceae</taxon>
        <taxon>Acidithiobacillus</taxon>
    </lineage>
</organism>
<accession>B5EQH8</accession>
<name>RL13_ACIF5</name>
<protein>
    <recommendedName>
        <fullName evidence="1">Large ribosomal subunit protein uL13</fullName>
    </recommendedName>
    <alternativeName>
        <fullName evidence="2">50S ribosomal protein L13</fullName>
    </alternativeName>
</protein>
<feature type="chain" id="PRO_1000144081" description="Large ribosomal subunit protein uL13">
    <location>
        <begin position="1"/>
        <end position="142"/>
    </location>
</feature>